<comment type="function">
    <text evidence="1">This protein is located at the 30S-50S ribosomal subunit interface and may play a role in the structure and function of the aminoacyl-tRNA binding site.</text>
</comment>
<comment type="similarity">
    <text evidence="1">Belongs to the bacterial ribosomal protein bL19 family.</text>
</comment>
<protein>
    <recommendedName>
        <fullName evidence="1">Large ribosomal subunit protein bL19</fullName>
    </recommendedName>
    <alternativeName>
        <fullName evidence="2">50S ribosomal protein L19</fullName>
    </alternativeName>
</protein>
<name>RL19_BLOFL</name>
<proteinExistence type="inferred from homology"/>
<feature type="chain" id="PRO_0000163433" description="Large ribosomal subunit protein bL19">
    <location>
        <begin position="1"/>
        <end position="117"/>
    </location>
</feature>
<evidence type="ECO:0000255" key="1">
    <source>
        <dbReference type="HAMAP-Rule" id="MF_00402"/>
    </source>
</evidence>
<evidence type="ECO:0000305" key="2"/>
<reference key="1">
    <citation type="journal article" date="2003" name="Proc. Natl. Acad. Sci. U.S.A.">
        <title>The genome sequence of Blochmannia floridanus: comparative analysis of reduced genomes.</title>
        <authorList>
            <person name="Gil R."/>
            <person name="Silva F.J."/>
            <person name="Zientz E."/>
            <person name="Delmotte F."/>
            <person name="Gonzalez-Candelas F."/>
            <person name="Latorre A."/>
            <person name="Rausell C."/>
            <person name="Kamerbeek J."/>
            <person name="Gadau J."/>
            <person name="Hoelldobler B."/>
            <person name="van Ham R.C.H.J."/>
            <person name="Gross R."/>
            <person name="Moya A."/>
        </authorList>
    </citation>
    <scope>NUCLEOTIDE SEQUENCE [LARGE SCALE GENOMIC DNA]</scope>
</reference>
<accession>Q7VQF8</accession>
<dbReference type="EMBL" id="BX248583">
    <property type="protein sequence ID" value="CAD83695.1"/>
    <property type="molecule type" value="Genomic_DNA"/>
</dbReference>
<dbReference type="SMR" id="Q7VQF8"/>
<dbReference type="STRING" id="203907.Bfl176"/>
<dbReference type="KEGG" id="bfl:Bfl176"/>
<dbReference type="eggNOG" id="COG0335">
    <property type="taxonomic scope" value="Bacteria"/>
</dbReference>
<dbReference type="HOGENOM" id="CLU_103507_2_2_6"/>
<dbReference type="OrthoDB" id="9803541at2"/>
<dbReference type="Proteomes" id="UP000002192">
    <property type="component" value="Chromosome"/>
</dbReference>
<dbReference type="GO" id="GO:0022625">
    <property type="term" value="C:cytosolic large ribosomal subunit"/>
    <property type="evidence" value="ECO:0007669"/>
    <property type="project" value="TreeGrafter"/>
</dbReference>
<dbReference type="GO" id="GO:0003735">
    <property type="term" value="F:structural constituent of ribosome"/>
    <property type="evidence" value="ECO:0007669"/>
    <property type="project" value="InterPro"/>
</dbReference>
<dbReference type="GO" id="GO:0006412">
    <property type="term" value="P:translation"/>
    <property type="evidence" value="ECO:0007669"/>
    <property type="project" value="UniProtKB-UniRule"/>
</dbReference>
<dbReference type="FunFam" id="2.30.30.790:FF:000001">
    <property type="entry name" value="50S ribosomal protein L19"/>
    <property type="match status" value="1"/>
</dbReference>
<dbReference type="Gene3D" id="2.30.30.790">
    <property type="match status" value="1"/>
</dbReference>
<dbReference type="HAMAP" id="MF_00402">
    <property type="entry name" value="Ribosomal_bL19"/>
    <property type="match status" value="1"/>
</dbReference>
<dbReference type="InterPro" id="IPR001857">
    <property type="entry name" value="Ribosomal_bL19"/>
</dbReference>
<dbReference type="InterPro" id="IPR018257">
    <property type="entry name" value="Ribosomal_bL19_CS"/>
</dbReference>
<dbReference type="InterPro" id="IPR038657">
    <property type="entry name" value="Ribosomal_bL19_sf"/>
</dbReference>
<dbReference type="InterPro" id="IPR008991">
    <property type="entry name" value="Translation_prot_SH3-like_sf"/>
</dbReference>
<dbReference type="NCBIfam" id="TIGR01024">
    <property type="entry name" value="rplS_bact"/>
    <property type="match status" value="1"/>
</dbReference>
<dbReference type="PANTHER" id="PTHR15680:SF9">
    <property type="entry name" value="LARGE RIBOSOMAL SUBUNIT PROTEIN BL19M"/>
    <property type="match status" value="1"/>
</dbReference>
<dbReference type="PANTHER" id="PTHR15680">
    <property type="entry name" value="RIBOSOMAL PROTEIN L19"/>
    <property type="match status" value="1"/>
</dbReference>
<dbReference type="Pfam" id="PF01245">
    <property type="entry name" value="Ribosomal_L19"/>
    <property type="match status" value="1"/>
</dbReference>
<dbReference type="PIRSF" id="PIRSF002191">
    <property type="entry name" value="Ribosomal_L19"/>
    <property type="match status" value="1"/>
</dbReference>
<dbReference type="PRINTS" id="PR00061">
    <property type="entry name" value="RIBOSOMALL19"/>
</dbReference>
<dbReference type="SUPFAM" id="SSF50104">
    <property type="entry name" value="Translation proteins SH3-like domain"/>
    <property type="match status" value="1"/>
</dbReference>
<dbReference type="PROSITE" id="PS01015">
    <property type="entry name" value="RIBOSOMAL_L19"/>
    <property type="match status" value="1"/>
</dbReference>
<organism>
    <name type="scientific">Blochmanniella floridana</name>
    <dbReference type="NCBI Taxonomy" id="203907"/>
    <lineage>
        <taxon>Bacteria</taxon>
        <taxon>Pseudomonadati</taxon>
        <taxon>Pseudomonadota</taxon>
        <taxon>Gammaproteobacteria</taxon>
        <taxon>Enterobacterales</taxon>
        <taxon>Enterobacteriaceae</taxon>
        <taxon>ant endosymbionts</taxon>
        <taxon>Candidatus Blochmanniella</taxon>
    </lineage>
</organism>
<keyword id="KW-1185">Reference proteome</keyword>
<keyword id="KW-0687">Ribonucleoprotein</keyword>
<keyword id="KW-0689">Ribosomal protein</keyword>
<sequence>MNEKIRNFESNQMKKDIPPLHPGDVVEISLWIIEGNKKRFQIFEGMIIAIKNRGLNSAFTVRKISSGEGVERVFQIHSPVIKEINIKKIGVVRRAKLYYLRNLKGKSARIKTRLHVN</sequence>
<gene>
    <name evidence="1" type="primary">rplS</name>
    <name type="ordered locus">Bfl176</name>
</gene>